<dbReference type="EMBL" id="CP000653">
    <property type="protein sequence ID" value="ABP62394.1"/>
    <property type="molecule type" value="Genomic_DNA"/>
</dbReference>
<dbReference type="RefSeq" id="WP_006178918.1">
    <property type="nucleotide sequence ID" value="NC_009436.1"/>
</dbReference>
<dbReference type="SMR" id="A4WFB4"/>
<dbReference type="STRING" id="399742.Ent638_3737"/>
<dbReference type="GeneID" id="97603655"/>
<dbReference type="KEGG" id="ent:Ent638_3737"/>
<dbReference type="eggNOG" id="COG0096">
    <property type="taxonomic scope" value="Bacteria"/>
</dbReference>
<dbReference type="HOGENOM" id="CLU_098428_0_0_6"/>
<dbReference type="OrthoDB" id="9802617at2"/>
<dbReference type="Proteomes" id="UP000000230">
    <property type="component" value="Chromosome"/>
</dbReference>
<dbReference type="GO" id="GO:1990904">
    <property type="term" value="C:ribonucleoprotein complex"/>
    <property type="evidence" value="ECO:0007669"/>
    <property type="project" value="UniProtKB-KW"/>
</dbReference>
<dbReference type="GO" id="GO:0005840">
    <property type="term" value="C:ribosome"/>
    <property type="evidence" value="ECO:0007669"/>
    <property type="project" value="UniProtKB-KW"/>
</dbReference>
<dbReference type="GO" id="GO:0019843">
    <property type="term" value="F:rRNA binding"/>
    <property type="evidence" value="ECO:0007669"/>
    <property type="project" value="UniProtKB-UniRule"/>
</dbReference>
<dbReference type="GO" id="GO:0003735">
    <property type="term" value="F:structural constituent of ribosome"/>
    <property type="evidence" value="ECO:0007669"/>
    <property type="project" value="InterPro"/>
</dbReference>
<dbReference type="GO" id="GO:0006412">
    <property type="term" value="P:translation"/>
    <property type="evidence" value="ECO:0007669"/>
    <property type="project" value="UniProtKB-UniRule"/>
</dbReference>
<dbReference type="FunFam" id="3.30.1370.30:FF:000003">
    <property type="entry name" value="30S ribosomal protein S8"/>
    <property type="match status" value="1"/>
</dbReference>
<dbReference type="FunFam" id="3.30.1490.10:FF:000001">
    <property type="entry name" value="30S ribosomal protein S8"/>
    <property type="match status" value="1"/>
</dbReference>
<dbReference type="Gene3D" id="3.30.1370.30">
    <property type="match status" value="1"/>
</dbReference>
<dbReference type="Gene3D" id="3.30.1490.10">
    <property type="match status" value="1"/>
</dbReference>
<dbReference type="HAMAP" id="MF_01302_B">
    <property type="entry name" value="Ribosomal_uS8_B"/>
    <property type="match status" value="1"/>
</dbReference>
<dbReference type="InterPro" id="IPR000630">
    <property type="entry name" value="Ribosomal_uS8"/>
</dbReference>
<dbReference type="InterPro" id="IPR047863">
    <property type="entry name" value="Ribosomal_uS8_CS"/>
</dbReference>
<dbReference type="InterPro" id="IPR035987">
    <property type="entry name" value="Ribosomal_uS8_sf"/>
</dbReference>
<dbReference type="NCBIfam" id="NF001109">
    <property type="entry name" value="PRK00136.1"/>
    <property type="match status" value="1"/>
</dbReference>
<dbReference type="PANTHER" id="PTHR11758">
    <property type="entry name" value="40S RIBOSOMAL PROTEIN S15A"/>
    <property type="match status" value="1"/>
</dbReference>
<dbReference type="Pfam" id="PF00410">
    <property type="entry name" value="Ribosomal_S8"/>
    <property type="match status" value="1"/>
</dbReference>
<dbReference type="SUPFAM" id="SSF56047">
    <property type="entry name" value="Ribosomal protein S8"/>
    <property type="match status" value="1"/>
</dbReference>
<dbReference type="PROSITE" id="PS00053">
    <property type="entry name" value="RIBOSOMAL_S8"/>
    <property type="match status" value="1"/>
</dbReference>
<comment type="function">
    <text evidence="1">One of the primary rRNA binding proteins, it binds directly to 16S rRNA central domain where it helps coordinate assembly of the platform of the 30S subunit.</text>
</comment>
<comment type="subunit">
    <text evidence="1">Part of the 30S ribosomal subunit. Contacts proteins S5 and S12.</text>
</comment>
<comment type="similarity">
    <text evidence="1">Belongs to the universal ribosomal protein uS8 family.</text>
</comment>
<evidence type="ECO:0000255" key="1">
    <source>
        <dbReference type="HAMAP-Rule" id="MF_01302"/>
    </source>
</evidence>
<evidence type="ECO:0000305" key="2"/>
<accession>A4WFB4</accession>
<proteinExistence type="inferred from homology"/>
<protein>
    <recommendedName>
        <fullName evidence="1">Small ribosomal subunit protein uS8</fullName>
    </recommendedName>
    <alternativeName>
        <fullName evidence="2">30S ribosomal protein S8</fullName>
    </alternativeName>
</protein>
<sequence>MSMQDPIADMLTRIRNGQAANKVAVTMPSAKLKVAIANVLKEEGFIEDFKVEGDTKPELELTLKYFQGKAVVESIQRVSRPGLRIYKKKDELPKVMAGLGIAVVSTSKGVMTDRAARQAGLGGEIICYVA</sequence>
<organism>
    <name type="scientific">Enterobacter sp. (strain 638)</name>
    <dbReference type="NCBI Taxonomy" id="399742"/>
    <lineage>
        <taxon>Bacteria</taxon>
        <taxon>Pseudomonadati</taxon>
        <taxon>Pseudomonadota</taxon>
        <taxon>Gammaproteobacteria</taxon>
        <taxon>Enterobacterales</taxon>
        <taxon>Enterobacteriaceae</taxon>
        <taxon>Enterobacter</taxon>
    </lineage>
</organism>
<gene>
    <name evidence="1" type="primary">rpsH</name>
    <name type="ordered locus">Ent638_3737</name>
</gene>
<reference key="1">
    <citation type="journal article" date="2010" name="PLoS Genet.">
        <title>Genome sequence of the plant growth promoting endophytic bacterium Enterobacter sp. 638.</title>
        <authorList>
            <person name="Taghavi S."/>
            <person name="van der Lelie D."/>
            <person name="Hoffman A."/>
            <person name="Zhang Y.B."/>
            <person name="Walla M.D."/>
            <person name="Vangronsveld J."/>
            <person name="Newman L."/>
            <person name="Monchy S."/>
        </authorList>
    </citation>
    <scope>NUCLEOTIDE SEQUENCE [LARGE SCALE GENOMIC DNA]</scope>
    <source>
        <strain>638</strain>
    </source>
</reference>
<feature type="chain" id="PRO_1000067487" description="Small ribosomal subunit protein uS8">
    <location>
        <begin position="1"/>
        <end position="130"/>
    </location>
</feature>
<keyword id="KW-0687">Ribonucleoprotein</keyword>
<keyword id="KW-0689">Ribosomal protein</keyword>
<keyword id="KW-0694">RNA-binding</keyword>
<keyword id="KW-0699">rRNA-binding</keyword>
<name>RS8_ENT38</name>